<dbReference type="PDB" id="2N9A">
    <property type="method" value="NMR"/>
    <property type="chains" value="A=1-11"/>
</dbReference>
<dbReference type="PDBsum" id="2N9A"/>
<dbReference type="BMRB" id="P85870"/>
<dbReference type="SMR" id="P85870"/>
<dbReference type="GO" id="GO:0005576">
    <property type="term" value="C:extracellular region"/>
    <property type="evidence" value="ECO:0000314"/>
    <property type="project" value="UniProtKB"/>
</dbReference>
<dbReference type="GO" id="GO:0016020">
    <property type="term" value="C:membrane"/>
    <property type="evidence" value="ECO:0007669"/>
    <property type="project" value="UniProtKB-KW"/>
</dbReference>
<dbReference type="GO" id="GO:0044218">
    <property type="term" value="C:other organism cell membrane"/>
    <property type="evidence" value="ECO:0007669"/>
    <property type="project" value="UniProtKB-KW"/>
</dbReference>
<dbReference type="GO" id="GO:0050832">
    <property type="term" value="P:defense response to fungus"/>
    <property type="evidence" value="ECO:0000314"/>
    <property type="project" value="UniProtKB"/>
</dbReference>
<dbReference type="GO" id="GO:0050829">
    <property type="term" value="P:defense response to Gram-negative bacterium"/>
    <property type="evidence" value="ECO:0000314"/>
    <property type="project" value="UniProtKB"/>
</dbReference>
<dbReference type="GO" id="GO:0050830">
    <property type="term" value="P:defense response to Gram-positive bacterium"/>
    <property type="evidence" value="ECO:0000314"/>
    <property type="project" value="UniProtKB"/>
</dbReference>
<dbReference type="GO" id="GO:0042832">
    <property type="term" value="P:defense response to protozoan"/>
    <property type="evidence" value="ECO:0000314"/>
    <property type="project" value="UniProtKB"/>
</dbReference>
<dbReference type="GO" id="GO:0031640">
    <property type="term" value="P:killing of cells of another organism"/>
    <property type="evidence" value="ECO:0007669"/>
    <property type="project" value="UniProtKB-KW"/>
</dbReference>
<dbReference type="GO" id="GO:0043306">
    <property type="term" value="P:positive regulation of mast cell degranulation"/>
    <property type="evidence" value="ECO:0000314"/>
    <property type="project" value="UniProtKB"/>
</dbReference>
<protein>
    <recommendedName>
        <fullName evidence="2 3">Decoralin</fullName>
        <shortName evidence="2 3">DEC</shortName>
    </recommendedName>
</protein>
<name>DCRLN_OREDC</name>
<reference key="1">
    <citation type="journal article" date="2007" name="Peptides">
        <title>Decoralin, a novel linear cationic alpha-helical peptide from the venom of the solitary eumenine wasp Oreumenes decoratus.</title>
        <authorList>
            <person name="Konno K."/>
            <person name="Rangel M."/>
            <person name="Oliveira J.S."/>
            <person name="Dos Santos Cabrera M.P."/>
            <person name="Fontana R."/>
            <person name="Hirata I.Y."/>
            <person name="Hide I."/>
            <person name="Nakata Y."/>
            <person name="Mori K."/>
            <person name="Kawano M."/>
            <person name="Fuchino H."/>
            <person name="Sekita S."/>
            <person name="Neto J.R."/>
        </authorList>
    </citation>
    <scope>PROTEIN SEQUENCE</scope>
    <scope>FUNCTION</scope>
    <scope>SUBCELLULAR LOCATION</scope>
    <scope>CIRCULAR DICHROISM</scope>
    <scope>MASS SPECTROMETRY</scope>
    <source>
        <tissue>Venom</tissue>
    </source>
</reference>
<reference key="2">
    <citation type="journal article" date="2016" name="Toxins">
        <title>Peptide toxins in solitary wasp venoms.</title>
        <authorList>
            <person name="Konno K."/>
            <person name="Kazuma K."/>
            <person name="Nihei K."/>
        </authorList>
    </citation>
    <scope>REVIEW</scope>
</reference>
<reference key="3">
    <citation type="journal article" date="2017" name="Chem. Biol. Drug Des.">
        <title>MD simulations and multivariate studies for modeling the antileishmanial activity of peptides.</title>
        <authorList>
            <person name="Guerra M.E.R."/>
            <person name="Fadel V."/>
            <person name="Maltarollo V.G."/>
            <person name="Baldissera G."/>
            <person name="Honorio K.M."/>
            <person name="Ruggiero J.R."/>
            <person name="Dos Santos Cabrera M.P."/>
        </authorList>
    </citation>
    <scope>STRUCTURE BY NMR OF SYNTHETIC C-TERMINALLY AMIDATED PEPTIDE</scope>
    <scope>SYNTHESIS</scope>
</reference>
<keyword id="KW-0002">3D-structure</keyword>
<keyword id="KW-0044">Antibiotic</keyword>
<keyword id="KW-0929">Antimicrobial</keyword>
<keyword id="KW-0204">Cytolysis</keyword>
<keyword id="KW-0903">Direct protein sequencing</keyword>
<keyword id="KW-0295">Fungicide</keyword>
<keyword id="KW-0467">Mast cell degranulation</keyword>
<keyword id="KW-0472">Membrane</keyword>
<keyword id="KW-0964">Secreted</keyword>
<keyword id="KW-1052">Target cell membrane</keyword>
<keyword id="KW-1053">Target membrane</keyword>
<feature type="peptide" id="PRO_0000343532" description="Decoralin" evidence="1">
    <location>
        <begin position="1"/>
        <end position="11"/>
    </location>
</feature>
<feature type="helix" evidence="6">
    <location>
        <begin position="2"/>
        <end position="4"/>
    </location>
</feature>
<feature type="helix" evidence="6">
    <location>
        <begin position="6"/>
        <end position="9"/>
    </location>
</feature>
<accession>P85870</accession>
<comment type="function">
    <text evidence="1">Linear cationic alpha-helical peptide that acts as antimicrobial peptide (PubMed:17981364). Has antibacterial activity against the Gram-positive bacteria S.aureus CCT 6538 (MIC=40 uM), S.saprophyticus (MIC=40 um), B.subtilis CCT 2471 (MIC=40 uM), and B.thuringiensis (MIC=40 uM), and against the Gram-negative bacteria E.coli ATCC 25922 (MIC=80), E.coli CCT 1371 (MIC=160), K.pneumonia ATCC 13883 (MIC=80), and A.faecalis ATCC 8750 (MIC=40) (PubMed:17981364). Has antifungal activity against C.albicans (MIC=40 uM) (PubMed:17981364). At high concentrations exhibits activity in stimulating degranulation from rat peritoneal mast cells (PubMed:17981364). Has very weak hemolytic activity towards human and mouse erythrocytes (PubMed:17981364). In vitro, inhibits the growth of L.major promastigotes (IC(50)=72 uM) (PubMed:17981364).</text>
</comment>
<comment type="subcellular location">
    <subcellularLocation>
        <location evidence="1">Secreted</location>
    </subcellularLocation>
    <subcellularLocation>
        <location evidence="1">Target cell membrane</location>
    </subcellularLocation>
    <text evidence="5">Forms an alpha-helical membrane channel in the prey.</text>
</comment>
<comment type="tissue specificity">
    <text evidence="4">Expressed by the venom gland.</text>
</comment>
<comment type="PTM">
    <text evidence="1">The natural peptide is not C-terminally amidated. However, amidated synthetic analogs show a much more potent activity in all the biological assays.</text>
</comment>
<comment type="mass spectrometry"/>
<proteinExistence type="evidence at protein level"/>
<sequence>SLLSLIRKLIT</sequence>
<organism>
    <name type="scientific">Oreumenes decoratus</name>
    <name type="common">Potter wasp</name>
    <dbReference type="NCBI Taxonomy" id="531920"/>
    <lineage>
        <taxon>Eukaryota</taxon>
        <taxon>Metazoa</taxon>
        <taxon>Ecdysozoa</taxon>
        <taxon>Arthropoda</taxon>
        <taxon>Hexapoda</taxon>
        <taxon>Insecta</taxon>
        <taxon>Pterygota</taxon>
        <taxon>Neoptera</taxon>
        <taxon>Endopterygota</taxon>
        <taxon>Hymenoptera</taxon>
        <taxon>Apocrita</taxon>
        <taxon>Aculeata</taxon>
        <taxon>Vespoidea</taxon>
        <taxon>Vespidae</taxon>
        <taxon>Eumeninae</taxon>
        <taxon>Oreumenes</taxon>
    </lineage>
</organism>
<evidence type="ECO:0000269" key="1">
    <source>
    </source>
</evidence>
<evidence type="ECO:0000303" key="2">
    <source>
    </source>
</evidence>
<evidence type="ECO:0000303" key="3">
    <source>
    </source>
</evidence>
<evidence type="ECO:0000305" key="4">
    <source>
    </source>
</evidence>
<evidence type="ECO:0000305" key="5">
    <source>
    </source>
</evidence>
<evidence type="ECO:0007829" key="6">
    <source>
        <dbReference type="PDB" id="2N9A"/>
    </source>
</evidence>